<comment type="function">
    <text evidence="1">Required for 40S ribosomal subunit synthesis. Required for normal export of the pre-40S particles from the nucleus to the cytoplasm (By similarity).</text>
</comment>
<comment type="subcellular location">
    <subcellularLocation>
        <location evidence="1">Cytoplasm</location>
    </subcellularLocation>
    <subcellularLocation>
        <location evidence="4">Nucleus</location>
        <location evidence="4">Nucleolus</location>
    </subcellularLocation>
</comment>
<comment type="similarity">
    <text evidence="5">Belongs to the TRAFAC class translation factor GTPase superfamily. Bms1-like GTPase family. TSR1 subfamily.</text>
</comment>
<dbReference type="EMBL" id="CU329670">
    <property type="protein sequence ID" value="CAB11669.1"/>
    <property type="molecule type" value="Genomic_DNA"/>
</dbReference>
<dbReference type="PIR" id="T38313">
    <property type="entry name" value="T38313"/>
</dbReference>
<dbReference type="RefSeq" id="NP_593391.1">
    <property type="nucleotide sequence ID" value="NM_001018823.2"/>
</dbReference>
<dbReference type="SMR" id="O13956"/>
<dbReference type="BioGRID" id="278272">
    <property type="interactions" value="1"/>
</dbReference>
<dbReference type="FunCoup" id="O13956">
    <property type="interactions" value="514"/>
</dbReference>
<dbReference type="STRING" id="284812.O13956"/>
<dbReference type="iPTMnet" id="O13956"/>
<dbReference type="PaxDb" id="4896-SPAC23H4.15.1"/>
<dbReference type="EnsemblFungi" id="SPAC23H4.15.1">
    <property type="protein sequence ID" value="SPAC23H4.15.1:pep"/>
    <property type="gene ID" value="SPAC23H4.15"/>
</dbReference>
<dbReference type="GeneID" id="2541779"/>
<dbReference type="KEGG" id="spo:2541779"/>
<dbReference type="PomBase" id="SPAC23H4.15">
    <property type="gene designation" value="tsr1"/>
</dbReference>
<dbReference type="VEuPathDB" id="FungiDB:SPAC23H4.15"/>
<dbReference type="eggNOG" id="KOG1980">
    <property type="taxonomic scope" value="Eukaryota"/>
</dbReference>
<dbReference type="HOGENOM" id="CLU_009858_1_0_1"/>
<dbReference type="InParanoid" id="O13956"/>
<dbReference type="OMA" id="MNLPRFK"/>
<dbReference type="PhylomeDB" id="O13956"/>
<dbReference type="PRO" id="PR:O13956"/>
<dbReference type="Proteomes" id="UP000002485">
    <property type="component" value="Chromosome I"/>
</dbReference>
<dbReference type="GO" id="GO:0005737">
    <property type="term" value="C:cytoplasm"/>
    <property type="evidence" value="ECO:0000266"/>
    <property type="project" value="PomBase"/>
</dbReference>
<dbReference type="GO" id="GO:0005730">
    <property type="term" value="C:nucleolus"/>
    <property type="evidence" value="ECO:0000266"/>
    <property type="project" value="PomBase"/>
</dbReference>
<dbReference type="GO" id="GO:0005634">
    <property type="term" value="C:nucleus"/>
    <property type="evidence" value="ECO:0007005"/>
    <property type="project" value="PomBase"/>
</dbReference>
<dbReference type="GO" id="GO:0005525">
    <property type="term" value="F:GTP binding"/>
    <property type="evidence" value="ECO:0000318"/>
    <property type="project" value="GO_Central"/>
</dbReference>
<dbReference type="GO" id="GO:0003924">
    <property type="term" value="F:GTPase activity"/>
    <property type="evidence" value="ECO:0000318"/>
    <property type="project" value="GO_Central"/>
</dbReference>
<dbReference type="GO" id="GO:0034511">
    <property type="term" value="F:U3 snoRNA binding"/>
    <property type="evidence" value="ECO:0000318"/>
    <property type="project" value="GO_Central"/>
</dbReference>
<dbReference type="GO" id="GO:0000479">
    <property type="term" value="P:endonucleolytic cleavage of tricistronic rRNA transcript (SSU-rRNA, 5.8S rRNA, LSU-rRNA)"/>
    <property type="evidence" value="ECO:0000318"/>
    <property type="project" value="GO_Central"/>
</dbReference>
<dbReference type="GO" id="GO:0000462">
    <property type="term" value="P:maturation of SSU-rRNA from tricistronic rRNA transcript (SSU-rRNA, 5.8S rRNA, LSU-rRNA)"/>
    <property type="evidence" value="ECO:0000318"/>
    <property type="project" value="GO_Central"/>
</dbReference>
<dbReference type="InterPro" id="IPR012948">
    <property type="entry name" value="AARP2CN"/>
</dbReference>
<dbReference type="InterPro" id="IPR039761">
    <property type="entry name" value="Bms1/Tsr1"/>
</dbReference>
<dbReference type="InterPro" id="IPR007034">
    <property type="entry name" value="BMS1_TSR1_C"/>
</dbReference>
<dbReference type="InterPro" id="IPR030387">
    <property type="entry name" value="G_Bms1/Tsr1_dom"/>
</dbReference>
<dbReference type="PANTHER" id="PTHR12858:SF1">
    <property type="entry name" value="PRE-RRNA-PROCESSING PROTEIN TSR1 HOMOLOG"/>
    <property type="match status" value="1"/>
</dbReference>
<dbReference type="PANTHER" id="PTHR12858">
    <property type="entry name" value="RIBOSOME BIOGENESIS PROTEIN"/>
    <property type="match status" value="1"/>
</dbReference>
<dbReference type="Pfam" id="PF08142">
    <property type="entry name" value="AARP2CN"/>
    <property type="match status" value="1"/>
</dbReference>
<dbReference type="Pfam" id="PF04950">
    <property type="entry name" value="RIBIOP_C"/>
    <property type="match status" value="1"/>
</dbReference>
<dbReference type="Pfam" id="PF22298">
    <property type="entry name" value="Tsr1_G-like"/>
    <property type="match status" value="1"/>
</dbReference>
<dbReference type="SMART" id="SM00785">
    <property type="entry name" value="AARP2CN"/>
    <property type="match status" value="1"/>
</dbReference>
<dbReference type="SMART" id="SM01362">
    <property type="entry name" value="DUF663"/>
    <property type="match status" value="1"/>
</dbReference>
<dbReference type="PROSITE" id="PS51714">
    <property type="entry name" value="G_BMS1"/>
    <property type="match status" value="1"/>
</dbReference>
<name>TSR1_SCHPO</name>
<organism>
    <name type="scientific">Schizosaccharomyces pombe (strain 972 / ATCC 24843)</name>
    <name type="common">Fission yeast</name>
    <dbReference type="NCBI Taxonomy" id="284812"/>
    <lineage>
        <taxon>Eukaryota</taxon>
        <taxon>Fungi</taxon>
        <taxon>Dikarya</taxon>
        <taxon>Ascomycota</taxon>
        <taxon>Taphrinomycotina</taxon>
        <taxon>Schizosaccharomycetes</taxon>
        <taxon>Schizosaccharomycetales</taxon>
        <taxon>Schizosaccharomycetaceae</taxon>
        <taxon>Schizosaccharomyces</taxon>
    </lineage>
</organism>
<evidence type="ECO:0000250" key="1"/>
<evidence type="ECO:0000255" key="2">
    <source>
        <dbReference type="PROSITE-ProRule" id="PRU01051"/>
    </source>
</evidence>
<evidence type="ECO:0000256" key="3">
    <source>
        <dbReference type="SAM" id="MobiDB-lite"/>
    </source>
</evidence>
<evidence type="ECO:0000269" key="4">
    <source>
    </source>
</evidence>
<evidence type="ECO:0000305" key="5"/>
<feature type="chain" id="PRO_0000339127" description="Ribosome biogenesis protein tsr1">
    <location>
        <begin position="1"/>
        <end position="783"/>
    </location>
</feature>
<feature type="domain" description="Bms1-type G" evidence="2">
    <location>
        <begin position="80"/>
        <end position="243"/>
    </location>
</feature>
<feature type="region of interest" description="Disordered" evidence="3">
    <location>
        <begin position="1"/>
        <end position="56"/>
    </location>
</feature>
<feature type="compositionally biased region" description="Basic residues" evidence="3">
    <location>
        <begin position="1"/>
        <end position="21"/>
    </location>
</feature>
<feature type="compositionally biased region" description="Basic and acidic residues" evidence="3">
    <location>
        <begin position="24"/>
        <end position="37"/>
    </location>
</feature>
<proteinExistence type="inferred from homology"/>
<protein>
    <recommendedName>
        <fullName>Ribosome biogenesis protein tsr1</fullName>
    </recommendedName>
</protein>
<sequence length="783" mass="90126">MAHHHRSTFKAKKPFKSKHASKSSLKEKYKNEVEPHRSGPKNIVHTSTKADRRNTAKQIQLNKRTEVAMNNRIFGGKNGAPKVITIVPLCNNVDSWNVLTNLLRSIDPEASLPKFDKDSISYSTTIDRFKQNLLFLLPKREFYSLIDACKVSDYVIFVLSAVQEVDEFGELIVRTTQGQGISSVLSMVHDLSEVDSLKTRNEVKKSLQSFMNFFFSDQERVFAADVSQDALNVMRALCTSHPRGIHWRDSRSYLLSQEISYSNGNLLVRGIVRGKGLDPNRLIHIQGFGDFAINRIYEAPQGIQNSRGISMDEDTNLTGGLVELCSPTQEQDSLESLGPIIDDMDTDMDSEVGKEASRGVRLDDFYYFDDEEEPVAVAKRVPKGTSTYQATWIPDEDEESDQYSDVEDTEVIIEDQDNQEISNHVAEEKIDSDEEETIDDAKSEMFVDLSEEEEVRQYEEYRKKQKELQEELEFPDEVELQPNELARERFKKYRGLRSLYTSQWDADEYDPNEPREWRQLFKFENYRNLKNKFLKQPFIGEAKPGKAVYVELRNVPIEIFEYYNKPWNLLVLYSLLQYENKLTVSQFTAMQHSEYEEPIESKEELLLQIGPRRFMVRPLYSDPTASGASNNLQKYHRYLPPKQAVIASVISPIVFGNVPIIMFKKSSDNSLRLAATGSYVNCDTNSVIAKRAVLTGHPFKVHKKLVTIRYMFFNPEDVIWFKPIQLFTKQGRTGYIKEPLGTHGYFKATFNGKITVQDTVAMSLYKRMYPLPCELFKVTDIDS</sequence>
<gene>
    <name type="primary">tsr1</name>
    <name type="ORF">SPAC23H4.15</name>
</gene>
<accession>O13956</accession>
<reference key="1">
    <citation type="journal article" date="2002" name="Nature">
        <title>The genome sequence of Schizosaccharomyces pombe.</title>
        <authorList>
            <person name="Wood V."/>
            <person name="Gwilliam R."/>
            <person name="Rajandream M.A."/>
            <person name="Lyne M.H."/>
            <person name="Lyne R."/>
            <person name="Stewart A."/>
            <person name="Sgouros J.G."/>
            <person name="Peat N."/>
            <person name="Hayles J."/>
            <person name="Baker S.G."/>
            <person name="Basham D."/>
            <person name="Bowman S."/>
            <person name="Brooks K."/>
            <person name="Brown D."/>
            <person name="Brown S."/>
            <person name="Chillingworth T."/>
            <person name="Churcher C.M."/>
            <person name="Collins M."/>
            <person name="Connor R."/>
            <person name="Cronin A."/>
            <person name="Davis P."/>
            <person name="Feltwell T."/>
            <person name="Fraser A."/>
            <person name="Gentles S."/>
            <person name="Goble A."/>
            <person name="Hamlin N."/>
            <person name="Harris D.E."/>
            <person name="Hidalgo J."/>
            <person name="Hodgson G."/>
            <person name="Holroyd S."/>
            <person name="Hornsby T."/>
            <person name="Howarth S."/>
            <person name="Huckle E.J."/>
            <person name="Hunt S."/>
            <person name="Jagels K."/>
            <person name="James K.D."/>
            <person name="Jones L."/>
            <person name="Jones M."/>
            <person name="Leather S."/>
            <person name="McDonald S."/>
            <person name="McLean J."/>
            <person name="Mooney P."/>
            <person name="Moule S."/>
            <person name="Mungall K.L."/>
            <person name="Murphy L.D."/>
            <person name="Niblett D."/>
            <person name="Odell C."/>
            <person name="Oliver K."/>
            <person name="O'Neil S."/>
            <person name="Pearson D."/>
            <person name="Quail M.A."/>
            <person name="Rabbinowitsch E."/>
            <person name="Rutherford K.M."/>
            <person name="Rutter S."/>
            <person name="Saunders D."/>
            <person name="Seeger K."/>
            <person name="Sharp S."/>
            <person name="Skelton J."/>
            <person name="Simmonds M.N."/>
            <person name="Squares R."/>
            <person name="Squares S."/>
            <person name="Stevens K."/>
            <person name="Taylor K."/>
            <person name="Taylor R.G."/>
            <person name="Tivey A."/>
            <person name="Walsh S.V."/>
            <person name="Warren T."/>
            <person name="Whitehead S."/>
            <person name="Woodward J.R."/>
            <person name="Volckaert G."/>
            <person name="Aert R."/>
            <person name="Robben J."/>
            <person name="Grymonprez B."/>
            <person name="Weltjens I."/>
            <person name="Vanstreels E."/>
            <person name="Rieger M."/>
            <person name="Schaefer M."/>
            <person name="Mueller-Auer S."/>
            <person name="Gabel C."/>
            <person name="Fuchs M."/>
            <person name="Duesterhoeft A."/>
            <person name="Fritzc C."/>
            <person name="Holzer E."/>
            <person name="Moestl D."/>
            <person name="Hilbert H."/>
            <person name="Borzym K."/>
            <person name="Langer I."/>
            <person name="Beck A."/>
            <person name="Lehrach H."/>
            <person name="Reinhardt R."/>
            <person name="Pohl T.M."/>
            <person name="Eger P."/>
            <person name="Zimmermann W."/>
            <person name="Wedler H."/>
            <person name="Wambutt R."/>
            <person name="Purnelle B."/>
            <person name="Goffeau A."/>
            <person name="Cadieu E."/>
            <person name="Dreano S."/>
            <person name="Gloux S."/>
            <person name="Lelaure V."/>
            <person name="Mottier S."/>
            <person name="Galibert F."/>
            <person name="Aves S.J."/>
            <person name="Xiang Z."/>
            <person name="Hunt C."/>
            <person name="Moore K."/>
            <person name="Hurst S.M."/>
            <person name="Lucas M."/>
            <person name="Rochet M."/>
            <person name="Gaillardin C."/>
            <person name="Tallada V.A."/>
            <person name="Garzon A."/>
            <person name="Thode G."/>
            <person name="Daga R.R."/>
            <person name="Cruzado L."/>
            <person name="Jimenez J."/>
            <person name="Sanchez M."/>
            <person name="del Rey F."/>
            <person name="Benito J."/>
            <person name="Dominguez A."/>
            <person name="Revuelta J.L."/>
            <person name="Moreno S."/>
            <person name="Armstrong J."/>
            <person name="Forsburg S.L."/>
            <person name="Cerutti L."/>
            <person name="Lowe T."/>
            <person name="McCombie W.R."/>
            <person name="Paulsen I."/>
            <person name="Potashkin J."/>
            <person name="Shpakovski G.V."/>
            <person name="Ussery D."/>
            <person name="Barrell B.G."/>
            <person name="Nurse P."/>
        </authorList>
    </citation>
    <scope>NUCLEOTIDE SEQUENCE [LARGE SCALE GENOMIC DNA]</scope>
    <source>
        <strain>972 / ATCC 24843</strain>
    </source>
</reference>
<reference key="2">
    <citation type="journal article" date="2006" name="Nat. Biotechnol.">
        <title>ORFeome cloning and global analysis of protein localization in the fission yeast Schizosaccharomyces pombe.</title>
        <authorList>
            <person name="Matsuyama A."/>
            <person name="Arai R."/>
            <person name="Yashiroda Y."/>
            <person name="Shirai A."/>
            <person name="Kamata A."/>
            <person name="Sekido S."/>
            <person name="Kobayashi Y."/>
            <person name="Hashimoto A."/>
            <person name="Hamamoto M."/>
            <person name="Hiraoka Y."/>
            <person name="Horinouchi S."/>
            <person name="Yoshida M."/>
        </authorList>
    </citation>
    <scope>SUBCELLULAR LOCATION [LARGE SCALE ANALYSIS]</scope>
</reference>
<keyword id="KW-0963">Cytoplasm</keyword>
<keyword id="KW-0539">Nucleus</keyword>
<keyword id="KW-1185">Reference proteome</keyword>
<keyword id="KW-0690">Ribosome biogenesis</keyword>